<evidence type="ECO:0000255" key="1">
    <source>
        <dbReference type="HAMAP-Rule" id="MF_00302"/>
    </source>
</evidence>
<protein>
    <recommendedName>
        <fullName evidence="1">ATP-dependent Clp protease adapter protein ClpS</fullName>
    </recommendedName>
</protein>
<name>CLPS_ECO81</name>
<feature type="chain" id="PRO_1000132809" description="ATP-dependent Clp protease adapter protein ClpS">
    <location>
        <begin position="1"/>
        <end position="106"/>
    </location>
</feature>
<sequence>MGKTNDWLDFDQLAEEKVRDALKPPSMYKVILVNDDYTPMEFVIDVLQKFFSYDVERATQLMLAVHYQGKAICGVFTAEVAETKVAMVNKYARENEHPLLCTLEKA</sequence>
<proteinExistence type="inferred from homology"/>
<accession>B7MRT8</accession>
<dbReference type="EMBL" id="CU928162">
    <property type="protein sequence ID" value="CAR07052.1"/>
    <property type="molecule type" value="Genomic_DNA"/>
</dbReference>
<dbReference type="RefSeq" id="WP_000520781.1">
    <property type="nucleotide sequence ID" value="NC_011745.1"/>
</dbReference>
<dbReference type="SMR" id="B7MRT8"/>
<dbReference type="GeneID" id="86863397"/>
<dbReference type="KEGG" id="ecq:ECED1_0848"/>
<dbReference type="HOGENOM" id="CLU_134358_2_1_6"/>
<dbReference type="Proteomes" id="UP000000748">
    <property type="component" value="Chromosome"/>
</dbReference>
<dbReference type="GO" id="GO:0030163">
    <property type="term" value="P:protein catabolic process"/>
    <property type="evidence" value="ECO:0007669"/>
    <property type="project" value="InterPro"/>
</dbReference>
<dbReference type="GO" id="GO:0006508">
    <property type="term" value="P:proteolysis"/>
    <property type="evidence" value="ECO:0007669"/>
    <property type="project" value="UniProtKB-UniRule"/>
</dbReference>
<dbReference type="FunFam" id="3.30.1390.10:FF:000002">
    <property type="entry name" value="ATP-dependent Clp protease adapter protein ClpS"/>
    <property type="match status" value="1"/>
</dbReference>
<dbReference type="Gene3D" id="3.30.1390.10">
    <property type="match status" value="1"/>
</dbReference>
<dbReference type="HAMAP" id="MF_00302">
    <property type="entry name" value="ClpS"/>
    <property type="match status" value="1"/>
</dbReference>
<dbReference type="InterPro" id="IPR022935">
    <property type="entry name" value="ClpS"/>
</dbReference>
<dbReference type="InterPro" id="IPR003769">
    <property type="entry name" value="ClpS_core"/>
</dbReference>
<dbReference type="InterPro" id="IPR014719">
    <property type="entry name" value="Ribosomal_bL12_C/ClpS-like"/>
</dbReference>
<dbReference type="NCBIfam" id="NF000670">
    <property type="entry name" value="PRK00033.1-3"/>
    <property type="match status" value="1"/>
</dbReference>
<dbReference type="NCBIfam" id="NF000672">
    <property type="entry name" value="PRK00033.1-5"/>
    <property type="match status" value="1"/>
</dbReference>
<dbReference type="PANTHER" id="PTHR33473:SF19">
    <property type="entry name" value="ATP-DEPENDENT CLP PROTEASE ADAPTER PROTEIN CLPS"/>
    <property type="match status" value="1"/>
</dbReference>
<dbReference type="PANTHER" id="PTHR33473">
    <property type="entry name" value="ATP-DEPENDENT CLP PROTEASE ADAPTER PROTEIN CLPS1, CHLOROPLASTIC"/>
    <property type="match status" value="1"/>
</dbReference>
<dbReference type="Pfam" id="PF02617">
    <property type="entry name" value="ClpS"/>
    <property type="match status" value="1"/>
</dbReference>
<dbReference type="SUPFAM" id="SSF54736">
    <property type="entry name" value="ClpS-like"/>
    <property type="match status" value="1"/>
</dbReference>
<gene>
    <name evidence="1" type="primary">clpS</name>
    <name type="ordered locus">ECED1_0848</name>
</gene>
<comment type="function">
    <text evidence="1">Involved in the modulation of the specificity of the ClpAP-mediated ATP-dependent protein degradation.</text>
</comment>
<comment type="subunit">
    <text evidence="1">Binds to the N-terminal domain of the chaperone ClpA.</text>
</comment>
<comment type="similarity">
    <text evidence="1">Belongs to the ClpS family.</text>
</comment>
<organism>
    <name type="scientific">Escherichia coli O81 (strain ED1a)</name>
    <dbReference type="NCBI Taxonomy" id="585397"/>
    <lineage>
        <taxon>Bacteria</taxon>
        <taxon>Pseudomonadati</taxon>
        <taxon>Pseudomonadota</taxon>
        <taxon>Gammaproteobacteria</taxon>
        <taxon>Enterobacterales</taxon>
        <taxon>Enterobacteriaceae</taxon>
        <taxon>Escherichia</taxon>
    </lineage>
</organism>
<reference key="1">
    <citation type="journal article" date="2009" name="PLoS Genet.">
        <title>Organised genome dynamics in the Escherichia coli species results in highly diverse adaptive paths.</title>
        <authorList>
            <person name="Touchon M."/>
            <person name="Hoede C."/>
            <person name="Tenaillon O."/>
            <person name="Barbe V."/>
            <person name="Baeriswyl S."/>
            <person name="Bidet P."/>
            <person name="Bingen E."/>
            <person name="Bonacorsi S."/>
            <person name="Bouchier C."/>
            <person name="Bouvet O."/>
            <person name="Calteau A."/>
            <person name="Chiapello H."/>
            <person name="Clermont O."/>
            <person name="Cruveiller S."/>
            <person name="Danchin A."/>
            <person name="Diard M."/>
            <person name="Dossat C."/>
            <person name="Karoui M.E."/>
            <person name="Frapy E."/>
            <person name="Garry L."/>
            <person name="Ghigo J.M."/>
            <person name="Gilles A.M."/>
            <person name="Johnson J."/>
            <person name="Le Bouguenec C."/>
            <person name="Lescat M."/>
            <person name="Mangenot S."/>
            <person name="Martinez-Jehanne V."/>
            <person name="Matic I."/>
            <person name="Nassif X."/>
            <person name="Oztas S."/>
            <person name="Petit M.A."/>
            <person name="Pichon C."/>
            <person name="Rouy Z."/>
            <person name="Ruf C.S."/>
            <person name="Schneider D."/>
            <person name="Tourret J."/>
            <person name="Vacherie B."/>
            <person name="Vallenet D."/>
            <person name="Medigue C."/>
            <person name="Rocha E.P.C."/>
            <person name="Denamur E."/>
        </authorList>
    </citation>
    <scope>NUCLEOTIDE SEQUENCE [LARGE SCALE GENOMIC DNA]</scope>
    <source>
        <strain>ED1a</strain>
    </source>
</reference>